<dbReference type="EC" id="3.4.23.36" evidence="1"/>
<dbReference type="EMBL" id="CP000964">
    <property type="protein sequence ID" value="ACI07125.1"/>
    <property type="molecule type" value="Genomic_DNA"/>
</dbReference>
<dbReference type="SMR" id="B5Y234"/>
<dbReference type="MEROPS" id="A08.001"/>
<dbReference type="KEGG" id="kpe:KPK_4734"/>
<dbReference type="HOGENOM" id="CLU_083252_4_0_6"/>
<dbReference type="UniPathway" id="UPA00665"/>
<dbReference type="Proteomes" id="UP000001734">
    <property type="component" value="Chromosome"/>
</dbReference>
<dbReference type="GO" id="GO:0005886">
    <property type="term" value="C:plasma membrane"/>
    <property type="evidence" value="ECO:0007669"/>
    <property type="project" value="UniProtKB-SubCell"/>
</dbReference>
<dbReference type="GO" id="GO:0004190">
    <property type="term" value="F:aspartic-type endopeptidase activity"/>
    <property type="evidence" value="ECO:0007669"/>
    <property type="project" value="UniProtKB-UniRule"/>
</dbReference>
<dbReference type="GO" id="GO:0006508">
    <property type="term" value="P:proteolysis"/>
    <property type="evidence" value="ECO:0007669"/>
    <property type="project" value="UniProtKB-KW"/>
</dbReference>
<dbReference type="HAMAP" id="MF_00161">
    <property type="entry name" value="LspA"/>
    <property type="match status" value="1"/>
</dbReference>
<dbReference type="InterPro" id="IPR001872">
    <property type="entry name" value="Peptidase_A8"/>
</dbReference>
<dbReference type="NCBIfam" id="TIGR00077">
    <property type="entry name" value="lspA"/>
    <property type="match status" value="1"/>
</dbReference>
<dbReference type="PANTHER" id="PTHR33695">
    <property type="entry name" value="LIPOPROTEIN SIGNAL PEPTIDASE"/>
    <property type="match status" value="1"/>
</dbReference>
<dbReference type="PANTHER" id="PTHR33695:SF1">
    <property type="entry name" value="LIPOPROTEIN SIGNAL PEPTIDASE"/>
    <property type="match status" value="1"/>
</dbReference>
<dbReference type="Pfam" id="PF01252">
    <property type="entry name" value="Peptidase_A8"/>
    <property type="match status" value="1"/>
</dbReference>
<dbReference type="PRINTS" id="PR00781">
    <property type="entry name" value="LIPOSIGPTASE"/>
</dbReference>
<dbReference type="PROSITE" id="PS00855">
    <property type="entry name" value="SPASE_II"/>
    <property type="match status" value="1"/>
</dbReference>
<accession>B5Y234</accession>
<reference key="1">
    <citation type="journal article" date="2008" name="PLoS Genet.">
        <title>Complete genome sequence of the N2-fixing broad host range endophyte Klebsiella pneumoniae 342 and virulence predictions verified in mice.</title>
        <authorList>
            <person name="Fouts D.E."/>
            <person name="Tyler H.L."/>
            <person name="DeBoy R.T."/>
            <person name="Daugherty S."/>
            <person name="Ren Q."/>
            <person name="Badger J.H."/>
            <person name="Durkin A.S."/>
            <person name="Huot H."/>
            <person name="Shrivastava S."/>
            <person name="Kothari S."/>
            <person name="Dodson R.J."/>
            <person name="Mohamoud Y."/>
            <person name="Khouri H."/>
            <person name="Roesch L.F.W."/>
            <person name="Krogfelt K.A."/>
            <person name="Struve C."/>
            <person name="Triplett E.W."/>
            <person name="Methe B.A."/>
        </authorList>
    </citation>
    <scope>NUCLEOTIDE SEQUENCE [LARGE SCALE GENOMIC DNA]</scope>
    <source>
        <strain>342</strain>
    </source>
</reference>
<sequence>MSKSICSTGLRWLWVVVAVLIIDLGSKFLILQNFALGETVPLFPSLNLHYARNYGAAFSFLADSGGWQRWFFSGIAIGICVVLTVLMYRSKATQKLNNIAYALIIGGALGNLFDRLWHGFVVDMIDFYVGDWHFATFNLADSAICIGAALIVLEGFLPKPTAKEQA</sequence>
<comment type="function">
    <text evidence="1">This protein specifically catalyzes the removal of signal peptides from prolipoproteins.</text>
</comment>
<comment type="catalytic activity">
    <reaction evidence="1">
        <text>Release of signal peptides from bacterial membrane prolipoproteins. Hydrolyzes -Xaa-Yaa-Zaa-|-(S,diacylglyceryl)Cys-, in which Xaa is hydrophobic (preferably Leu), and Yaa (Ala or Ser) and Zaa (Gly or Ala) have small, neutral side chains.</text>
        <dbReference type="EC" id="3.4.23.36"/>
    </reaction>
</comment>
<comment type="pathway">
    <text evidence="1">Protein modification; lipoprotein biosynthesis (signal peptide cleavage).</text>
</comment>
<comment type="subcellular location">
    <subcellularLocation>
        <location evidence="1">Cell inner membrane</location>
        <topology evidence="1">Multi-pass membrane protein</topology>
    </subcellularLocation>
</comment>
<comment type="similarity">
    <text evidence="1">Belongs to the peptidase A8 family.</text>
</comment>
<name>LSPA_KLEP3</name>
<protein>
    <recommendedName>
        <fullName evidence="1">Lipoprotein signal peptidase</fullName>
        <ecNumber evidence="1">3.4.23.36</ecNumber>
    </recommendedName>
    <alternativeName>
        <fullName evidence="1">Prolipoprotein signal peptidase</fullName>
    </alternativeName>
    <alternativeName>
        <fullName evidence="1">Signal peptidase II</fullName>
        <shortName evidence="1">SPase II</shortName>
    </alternativeName>
</protein>
<evidence type="ECO:0000255" key="1">
    <source>
        <dbReference type="HAMAP-Rule" id="MF_00161"/>
    </source>
</evidence>
<keyword id="KW-0064">Aspartyl protease</keyword>
<keyword id="KW-0997">Cell inner membrane</keyword>
<keyword id="KW-1003">Cell membrane</keyword>
<keyword id="KW-0378">Hydrolase</keyword>
<keyword id="KW-0472">Membrane</keyword>
<keyword id="KW-0645">Protease</keyword>
<keyword id="KW-0812">Transmembrane</keyword>
<keyword id="KW-1133">Transmembrane helix</keyword>
<gene>
    <name evidence="1" type="primary">lspA</name>
    <name type="ordered locus">KPK_4734</name>
</gene>
<feature type="chain" id="PRO_1000097260" description="Lipoprotein signal peptidase">
    <location>
        <begin position="1"/>
        <end position="166"/>
    </location>
</feature>
<feature type="transmembrane region" description="Helical" evidence="1">
    <location>
        <begin position="12"/>
        <end position="32"/>
    </location>
</feature>
<feature type="transmembrane region" description="Helical" evidence="1">
    <location>
        <begin position="70"/>
        <end position="90"/>
    </location>
</feature>
<feature type="transmembrane region" description="Helical" evidence="1">
    <location>
        <begin position="102"/>
        <end position="122"/>
    </location>
</feature>
<feature type="transmembrane region" description="Helical" evidence="1">
    <location>
        <begin position="137"/>
        <end position="157"/>
    </location>
</feature>
<feature type="active site" evidence="1">
    <location>
        <position position="123"/>
    </location>
</feature>
<feature type="active site" evidence="1">
    <location>
        <position position="141"/>
    </location>
</feature>
<organism>
    <name type="scientific">Klebsiella pneumoniae (strain 342)</name>
    <dbReference type="NCBI Taxonomy" id="507522"/>
    <lineage>
        <taxon>Bacteria</taxon>
        <taxon>Pseudomonadati</taxon>
        <taxon>Pseudomonadota</taxon>
        <taxon>Gammaproteobacteria</taxon>
        <taxon>Enterobacterales</taxon>
        <taxon>Enterobacteriaceae</taxon>
        <taxon>Klebsiella/Raoultella group</taxon>
        <taxon>Klebsiella</taxon>
        <taxon>Klebsiella pneumoniae complex</taxon>
    </lineage>
</organism>
<proteinExistence type="inferred from homology"/>